<reference key="1">
    <citation type="journal article" date="2004" name="Nat. Genet.">
        <title>Evidence in the Legionella pneumophila genome for exploitation of host cell functions and high genome plasticity.</title>
        <authorList>
            <person name="Cazalet C."/>
            <person name="Rusniok C."/>
            <person name="Brueggemann H."/>
            <person name="Zidane N."/>
            <person name="Magnier A."/>
            <person name="Ma L."/>
            <person name="Tichit M."/>
            <person name="Jarraud S."/>
            <person name="Bouchier C."/>
            <person name="Vandenesch F."/>
            <person name="Kunst F."/>
            <person name="Etienne J."/>
            <person name="Glaser P."/>
            <person name="Buchrieser C."/>
        </authorList>
    </citation>
    <scope>NUCLEOTIDE SEQUENCE [LARGE SCALE GENOMIC DNA]</scope>
    <source>
        <strain>Lens</strain>
    </source>
</reference>
<proteinExistence type="inferred from homology"/>
<organism>
    <name type="scientific">Legionella pneumophila (strain Lens)</name>
    <dbReference type="NCBI Taxonomy" id="297245"/>
    <lineage>
        <taxon>Bacteria</taxon>
        <taxon>Pseudomonadati</taxon>
        <taxon>Pseudomonadota</taxon>
        <taxon>Gammaproteobacteria</taxon>
        <taxon>Legionellales</taxon>
        <taxon>Legionellaceae</taxon>
        <taxon>Legionella</taxon>
    </lineage>
</organism>
<evidence type="ECO:0000255" key="1">
    <source>
        <dbReference type="HAMAP-Rule" id="MF_01161"/>
    </source>
</evidence>
<comment type="function">
    <text evidence="1">Ligates lysine onto the cytidine present at position 34 of the AUA codon-specific tRNA(Ile) that contains the anticodon CAU, in an ATP-dependent manner. Cytidine is converted to lysidine, thus changing the amino acid specificity of the tRNA from methionine to isoleucine.</text>
</comment>
<comment type="catalytic activity">
    <reaction evidence="1">
        <text>cytidine(34) in tRNA(Ile2) + L-lysine + ATP = lysidine(34) in tRNA(Ile2) + AMP + diphosphate + H(+)</text>
        <dbReference type="Rhea" id="RHEA:43744"/>
        <dbReference type="Rhea" id="RHEA-COMP:10625"/>
        <dbReference type="Rhea" id="RHEA-COMP:10670"/>
        <dbReference type="ChEBI" id="CHEBI:15378"/>
        <dbReference type="ChEBI" id="CHEBI:30616"/>
        <dbReference type="ChEBI" id="CHEBI:32551"/>
        <dbReference type="ChEBI" id="CHEBI:33019"/>
        <dbReference type="ChEBI" id="CHEBI:82748"/>
        <dbReference type="ChEBI" id="CHEBI:83665"/>
        <dbReference type="ChEBI" id="CHEBI:456215"/>
        <dbReference type="EC" id="6.3.4.19"/>
    </reaction>
</comment>
<comment type="subcellular location">
    <subcellularLocation>
        <location evidence="1">Cytoplasm</location>
    </subcellularLocation>
</comment>
<comment type="domain">
    <text>The N-terminal region contains the highly conserved SGGXDS motif, predicted to be a P-loop motif involved in ATP binding.</text>
</comment>
<comment type="similarity">
    <text evidence="1">Belongs to the tRNA(Ile)-lysidine synthase family.</text>
</comment>
<feature type="chain" id="PRO_0000181712" description="tRNA(Ile)-lysidine synthase">
    <location>
        <begin position="1"/>
        <end position="431"/>
    </location>
</feature>
<feature type="binding site" evidence="1">
    <location>
        <begin position="25"/>
        <end position="30"/>
    </location>
    <ligand>
        <name>ATP</name>
        <dbReference type="ChEBI" id="CHEBI:30616"/>
    </ligand>
</feature>
<accession>Q5WYB4</accession>
<sequence>MTRPLLSPEWVARLKQFKKLIVGFSGGLDSTVLLHVLASTPPLYNQLLAVHINHGISGNSLNWQRHCEQLCLDLGIAFIAKAIEFDRSANVEEAARNARYDFFSSLLEDNDCLVLGHHLDDQAETVLLQLFRGAGVDGLAAMQECSNLGAGQLARPFLTCPRVELEHYARIHELKWIEDESNQDTKYSRNYLRHRVMPLLLEKWPGVAGNISRAATHCQQAKANLEVLAIKDCPDLLNATDHLLIEPLKGLEFERITNVLKFWLKKNRVQLPSSKTFQRIIHEIIFAKLDAMPTVSWNQIQVRRFQQHLYLLKADQINLPKAIKWQQFPASLTYPDANIELSAVKAQKGLMIPKDAQIEIRFRKGGEEIYWHDQTKHLKKLFQEWQIPPWLRERVPLVYINDQLACVVGYAVSDLFFTTNPLEAWSIVNNS</sequence>
<protein>
    <recommendedName>
        <fullName evidence="1">tRNA(Ile)-lysidine synthase</fullName>
        <ecNumber evidence="1">6.3.4.19</ecNumber>
    </recommendedName>
    <alternativeName>
        <fullName evidence="1">tRNA(Ile)-2-lysyl-cytidine synthase</fullName>
    </alternativeName>
    <alternativeName>
        <fullName evidence="1">tRNA(Ile)-lysidine synthetase</fullName>
    </alternativeName>
</protein>
<name>TILS_LEGPL</name>
<gene>
    <name evidence="1" type="primary">tilS</name>
    <name type="ordered locus">lpl0825</name>
</gene>
<keyword id="KW-0067">ATP-binding</keyword>
<keyword id="KW-0963">Cytoplasm</keyword>
<keyword id="KW-0436">Ligase</keyword>
<keyword id="KW-0547">Nucleotide-binding</keyword>
<keyword id="KW-0819">tRNA processing</keyword>
<dbReference type="EC" id="6.3.4.19" evidence="1"/>
<dbReference type="EMBL" id="CR628337">
    <property type="protein sequence ID" value="CAH15059.1"/>
    <property type="molecule type" value="Genomic_DNA"/>
</dbReference>
<dbReference type="RefSeq" id="WP_011214985.1">
    <property type="nucleotide sequence ID" value="NC_006369.1"/>
</dbReference>
<dbReference type="SMR" id="Q5WYB4"/>
<dbReference type="KEGG" id="lpf:lpl0825"/>
<dbReference type="LegioList" id="lpl0825"/>
<dbReference type="HOGENOM" id="CLU_018869_2_0_6"/>
<dbReference type="Proteomes" id="UP000002517">
    <property type="component" value="Chromosome"/>
</dbReference>
<dbReference type="GO" id="GO:0005737">
    <property type="term" value="C:cytoplasm"/>
    <property type="evidence" value="ECO:0007669"/>
    <property type="project" value="UniProtKB-SubCell"/>
</dbReference>
<dbReference type="GO" id="GO:0005524">
    <property type="term" value="F:ATP binding"/>
    <property type="evidence" value="ECO:0007669"/>
    <property type="project" value="UniProtKB-UniRule"/>
</dbReference>
<dbReference type="GO" id="GO:0032267">
    <property type="term" value="F:tRNA(Ile)-lysidine synthase activity"/>
    <property type="evidence" value="ECO:0007669"/>
    <property type="project" value="UniProtKB-EC"/>
</dbReference>
<dbReference type="GO" id="GO:0006400">
    <property type="term" value="P:tRNA modification"/>
    <property type="evidence" value="ECO:0007669"/>
    <property type="project" value="UniProtKB-UniRule"/>
</dbReference>
<dbReference type="CDD" id="cd01992">
    <property type="entry name" value="TilS_N"/>
    <property type="match status" value="1"/>
</dbReference>
<dbReference type="Gene3D" id="1.20.59.20">
    <property type="match status" value="1"/>
</dbReference>
<dbReference type="Gene3D" id="3.40.50.620">
    <property type="entry name" value="HUPs"/>
    <property type="match status" value="1"/>
</dbReference>
<dbReference type="HAMAP" id="MF_01161">
    <property type="entry name" value="tRNA_Ile_lys_synt"/>
    <property type="match status" value="1"/>
</dbReference>
<dbReference type="InterPro" id="IPR012796">
    <property type="entry name" value="Lysidine-tRNA-synth_C"/>
</dbReference>
<dbReference type="InterPro" id="IPR014729">
    <property type="entry name" value="Rossmann-like_a/b/a_fold"/>
</dbReference>
<dbReference type="InterPro" id="IPR011063">
    <property type="entry name" value="TilS/TtcA_N"/>
</dbReference>
<dbReference type="InterPro" id="IPR012094">
    <property type="entry name" value="tRNA_Ile_lys_synt"/>
</dbReference>
<dbReference type="InterPro" id="IPR012795">
    <property type="entry name" value="tRNA_Ile_lys_synt_N"/>
</dbReference>
<dbReference type="InterPro" id="IPR015262">
    <property type="entry name" value="tRNA_Ile_lys_synt_subst-bd"/>
</dbReference>
<dbReference type="NCBIfam" id="TIGR02433">
    <property type="entry name" value="lysidine_TilS_C"/>
    <property type="match status" value="1"/>
</dbReference>
<dbReference type="NCBIfam" id="TIGR02432">
    <property type="entry name" value="lysidine_TilS_N"/>
    <property type="match status" value="1"/>
</dbReference>
<dbReference type="PANTHER" id="PTHR43033">
    <property type="entry name" value="TRNA(ILE)-LYSIDINE SYNTHASE-RELATED"/>
    <property type="match status" value="1"/>
</dbReference>
<dbReference type="PANTHER" id="PTHR43033:SF1">
    <property type="entry name" value="TRNA(ILE)-LYSIDINE SYNTHASE-RELATED"/>
    <property type="match status" value="1"/>
</dbReference>
<dbReference type="Pfam" id="PF01171">
    <property type="entry name" value="ATP_bind_3"/>
    <property type="match status" value="1"/>
</dbReference>
<dbReference type="Pfam" id="PF09179">
    <property type="entry name" value="TilS"/>
    <property type="match status" value="1"/>
</dbReference>
<dbReference type="Pfam" id="PF11734">
    <property type="entry name" value="TilS_C"/>
    <property type="match status" value="1"/>
</dbReference>
<dbReference type="SMART" id="SM00977">
    <property type="entry name" value="TilS_C"/>
    <property type="match status" value="1"/>
</dbReference>
<dbReference type="SUPFAM" id="SSF52402">
    <property type="entry name" value="Adenine nucleotide alpha hydrolases-like"/>
    <property type="match status" value="1"/>
</dbReference>
<dbReference type="SUPFAM" id="SSF82829">
    <property type="entry name" value="MesJ substrate recognition domain-like"/>
    <property type="match status" value="1"/>
</dbReference>
<dbReference type="SUPFAM" id="SSF56037">
    <property type="entry name" value="PheT/TilS domain"/>
    <property type="match status" value="1"/>
</dbReference>